<protein>
    <recommendedName>
        <fullName evidence="1">Glycine--tRNA ligase beta subunit</fullName>
        <ecNumber evidence="1">6.1.1.14</ecNumber>
    </recommendedName>
    <alternativeName>
        <fullName evidence="1">Glycyl-tRNA synthetase beta subunit</fullName>
        <shortName evidence="1">GlyRS</shortName>
    </alternativeName>
</protein>
<feature type="chain" id="PRO_1000101336" description="Glycine--tRNA ligase beta subunit">
    <location>
        <begin position="1"/>
        <end position="689"/>
    </location>
</feature>
<evidence type="ECO:0000255" key="1">
    <source>
        <dbReference type="HAMAP-Rule" id="MF_00255"/>
    </source>
</evidence>
<comment type="catalytic activity">
    <reaction evidence="1">
        <text>tRNA(Gly) + glycine + ATP = glycyl-tRNA(Gly) + AMP + diphosphate</text>
        <dbReference type="Rhea" id="RHEA:16013"/>
        <dbReference type="Rhea" id="RHEA-COMP:9664"/>
        <dbReference type="Rhea" id="RHEA-COMP:9683"/>
        <dbReference type="ChEBI" id="CHEBI:30616"/>
        <dbReference type="ChEBI" id="CHEBI:33019"/>
        <dbReference type="ChEBI" id="CHEBI:57305"/>
        <dbReference type="ChEBI" id="CHEBI:78442"/>
        <dbReference type="ChEBI" id="CHEBI:78522"/>
        <dbReference type="ChEBI" id="CHEBI:456215"/>
        <dbReference type="EC" id="6.1.1.14"/>
    </reaction>
</comment>
<comment type="subunit">
    <text evidence="1">Tetramer of two alpha and two beta subunits.</text>
</comment>
<comment type="subcellular location">
    <subcellularLocation>
        <location evidence="1">Cytoplasm</location>
    </subcellularLocation>
</comment>
<comment type="similarity">
    <text evidence="1">Belongs to the class-II aminoacyl-tRNA synthetase family.</text>
</comment>
<proteinExistence type="inferred from homology"/>
<accession>B4SWK1</accession>
<name>SYGB_SALNS</name>
<reference key="1">
    <citation type="journal article" date="2011" name="J. Bacteriol.">
        <title>Comparative genomics of 28 Salmonella enterica isolates: evidence for CRISPR-mediated adaptive sublineage evolution.</title>
        <authorList>
            <person name="Fricke W.F."/>
            <person name="Mammel M.K."/>
            <person name="McDermott P.F."/>
            <person name="Tartera C."/>
            <person name="White D.G."/>
            <person name="Leclerc J.E."/>
            <person name="Ravel J."/>
            <person name="Cebula T.A."/>
        </authorList>
    </citation>
    <scope>NUCLEOTIDE SEQUENCE [LARGE SCALE GENOMIC DNA]</scope>
    <source>
        <strain>SL254</strain>
    </source>
</reference>
<organism>
    <name type="scientific">Salmonella newport (strain SL254)</name>
    <dbReference type="NCBI Taxonomy" id="423368"/>
    <lineage>
        <taxon>Bacteria</taxon>
        <taxon>Pseudomonadati</taxon>
        <taxon>Pseudomonadota</taxon>
        <taxon>Gammaproteobacteria</taxon>
        <taxon>Enterobacterales</taxon>
        <taxon>Enterobacteriaceae</taxon>
        <taxon>Salmonella</taxon>
    </lineage>
</organism>
<gene>
    <name evidence="1" type="primary">glyS</name>
    <name type="ordered locus">SNSL254_A3931</name>
</gene>
<sequence length="689" mass="76453">MSEKTFLVEIGTEELPPKALRSLAESFAANFTAELDNAGLAHGNVEWFAAPRRLALKVANLAESQPDREVEKRGPAIAQAFDAEGKPSKAAEGWARGCGITVDQAERLKTDKGEWLLYRAHVKGESTEALVPNMVATSLAKLPIPKLMRWGASDVHFVRPVHTVTLLLGDKVIPATILGIQSDRVIRGHRFMGEPEFTIDNADQYPQILLERGKVIADYEARKAKIKADAEEAARKIGGNADLSESLLEEVASLVEWPVVLTAKFEEKFLAVPAEALVYTMKGDQKYFPVYDNAGKLLPNFIFVANIESKDPTQIISGNEKVVRPRLADAEFFFNTDRKKRLEDHLPRLQTVLFQQQLGTLRDKTDRIQALAGWIAGQIGADVNHATRAGLLSKCDLMTNMVFEFTDTQGVMGMHYARHDGEAEDVAVALNEQYQPRFAGDDLPSNPVACALAIADKMDTLAGIFGIGQHPKGDKDPFALRRAALGVLRIIVEKNLALDLQTLTEEAVRLYGDKLTNANVVDDVIDFMLGRFRAWYQDEGYTVDTIQAVLARRPTRPADFDARMKAVSHFRTLEEASALAAANKRVSNILAKATEPLNDIVHASVLKEAAEIELARHLVVLRDKLQPYFADGRYQEALIELAALRAPVDEFFENVMVNAEEKDIRINRLTLLSKLRELFLQVADISLLQ</sequence>
<keyword id="KW-0030">Aminoacyl-tRNA synthetase</keyword>
<keyword id="KW-0067">ATP-binding</keyword>
<keyword id="KW-0963">Cytoplasm</keyword>
<keyword id="KW-0436">Ligase</keyword>
<keyword id="KW-0547">Nucleotide-binding</keyword>
<keyword id="KW-0648">Protein biosynthesis</keyword>
<dbReference type="EC" id="6.1.1.14" evidence="1"/>
<dbReference type="EMBL" id="CP001113">
    <property type="protein sequence ID" value="ACF62447.1"/>
    <property type="molecule type" value="Genomic_DNA"/>
</dbReference>
<dbReference type="RefSeq" id="WP_001291736.1">
    <property type="nucleotide sequence ID" value="NZ_CCMR01000004.1"/>
</dbReference>
<dbReference type="SMR" id="B4SWK1"/>
<dbReference type="KEGG" id="see:SNSL254_A3931"/>
<dbReference type="HOGENOM" id="CLU_007220_2_2_6"/>
<dbReference type="Proteomes" id="UP000008824">
    <property type="component" value="Chromosome"/>
</dbReference>
<dbReference type="GO" id="GO:0005829">
    <property type="term" value="C:cytosol"/>
    <property type="evidence" value="ECO:0007669"/>
    <property type="project" value="TreeGrafter"/>
</dbReference>
<dbReference type="GO" id="GO:0004814">
    <property type="term" value="F:arginine-tRNA ligase activity"/>
    <property type="evidence" value="ECO:0007669"/>
    <property type="project" value="InterPro"/>
</dbReference>
<dbReference type="GO" id="GO:0005524">
    <property type="term" value="F:ATP binding"/>
    <property type="evidence" value="ECO:0007669"/>
    <property type="project" value="UniProtKB-UniRule"/>
</dbReference>
<dbReference type="GO" id="GO:0004820">
    <property type="term" value="F:glycine-tRNA ligase activity"/>
    <property type="evidence" value="ECO:0007669"/>
    <property type="project" value="UniProtKB-UniRule"/>
</dbReference>
<dbReference type="GO" id="GO:0006420">
    <property type="term" value="P:arginyl-tRNA aminoacylation"/>
    <property type="evidence" value="ECO:0007669"/>
    <property type="project" value="InterPro"/>
</dbReference>
<dbReference type="GO" id="GO:0006426">
    <property type="term" value="P:glycyl-tRNA aminoacylation"/>
    <property type="evidence" value="ECO:0007669"/>
    <property type="project" value="UniProtKB-UniRule"/>
</dbReference>
<dbReference type="HAMAP" id="MF_00255">
    <property type="entry name" value="Gly_tRNA_synth_beta"/>
    <property type="match status" value="1"/>
</dbReference>
<dbReference type="InterPro" id="IPR008909">
    <property type="entry name" value="DALR_anticod-bd"/>
</dbReference>
<dbReference type="InterPro" id="IPR015944">
    <property type="entry name" value="Gly-tRNA-synth_bsu"/>
</dbReference>
<dbReference type="InterPro" id="IPR006194">
    <property type="entry name" value="Gly-tRNA-synth_heterodimer"/>
</dbReference>
<dbReference type="NCBIfam" id="TIGR00211">
    <property type="entry name" value="glyS"/>
    <property type="match status" value="1"/>
</dbReference>
<dbReference type="PANTHER" id="PTHR30075:SF2">
    <property type="entry name" value="GLYCINE--TRNA LIGASE, CHLOROPLASTIC_MITOCHONDRIAL 2"/>
    <property type="match status" value="1"/>
</dbReference>
<dbReference type="PANTHER" id="PTHR30075">
    <property type="entry name" value="GLYCYL-TRNA SYNTHETASE"/>
    <property type="match status" value="1"/>
</dbReference>
<dbReference type="Pfam" id="PF05746">
    <property type="entry name" value="DALR_1"/>
    <property type="match status" value="1"/>
</dbReference>
<dbReference type="Pfam" id="PF02092">
    <property type="entry name" value="tRNA_synt_2f"/>
    <property type="match status" value="1"/>
</dbReference>
<dbReference type="PRINTS" id="PR01045">
    <property type="entry name" value="TRNASYNTHGB"/>
</dbReference>
<dbReference type="SUPFAM" id="SSF109604">
    <property type="entry name" value="HD-domain/PDEase-like"/>
    <property type="match status" value="1"/>
</dbReference>
<dbReference type="PROSITE" id="PS50861">
    <property type="entry name" value="AA_TRNA_LIGASE_II_GLYAB"/>
    <property type="match status" value="1"/>
</dbReference>